<proteinExistence type="evidence at protein level"/>
<evidence type="ECO:0000250" key="1">
    <source>
        <dbReference type="UniProtKB" id="Q8NFJ9"/>
    </source>
</evidence>
<evidence type="ECO:0000269" key="2">
    <source>
    </source>
</evidence>
<evidence type="ECO:0000269" key="3">
    <source>
    </source>
</evidence>
<evidence type="ECO:0000269" key="4">
    <source>
    </source>
</evidence>
<evidence type="ECO:0000305" key="5"/>
<protein>
    <recommendedName>
        <fullName evidence="5">BBSome complex member BBS1</fullName>
    </recommendedName>
    <alternativeName>
        <fullName>Bardet-Biedl syndrome 1 protein homolog</fullName>
    </alternativeName>
</protein>
<keyword id="KW-0007">Acetylation</keyword>
<keyword id="KW-1003">Cell membrane</keyword>
<keyword id="KW-0966">Cell projection</keyword>
<keyword id="KW-0969">Cilium</keyword>
<keyword id="KW-0970">Cilium biogenesis/degradation</keyword>
<keyword id="KW-0963">Cytoplasm</keyword>
<keyword id="KW-0206">Cytoskeleton</keyword>
<keyword id="KW-0472">Membrane</keyword>
<keyword id="KW-0552">Olfaction</keyword>
<keyword id="KW-0653">Protein transport</keyword>
<keyword id="KW-1185">Reference proteome</keyword>
<keyword id="KW-0716">Sensory transduction</keyword>
<keyword id="KW-0813">Transport</keyword>
<keyword id="KW-0844">Vision</keyword>
<accession>Q3V3N7</accession>
<comment type="function">
    <text evidence="1 2 4">The BBSome complex is thought to function as a coat complex required for sorting of specific membrane proteins to the primary cilia. The BBSome complex is required for ciliogenesis but is dispensable for centriolar satellite function. This ciliogenic function is mediated in part by the Rab8 GDP/GTP exchange factor, which localizes to the basal body and contacts the BBSome. Rab8(GTP) enters the primary cilium and promotes extension of the ciliary membrane. Firstly the BBSome associates with the ciliary membrane and binds to RAB3IP/Rabin8, the guanosyl exchange factor (GEF) for Rab8 and then the Rab8-GTP localizes to the cilium and promotes docking and fusion of carrier vesicles to the base of the ciliary membrane. The BBSome complex, together with the LTZL1, controls SMO ciliary trafficking and contributes to the sonic hedgehog (SHH) pathway regulation. Required for proper BBSome complex assembly (By similarity). Plays a role in olfactory cilium biogenesis/maintenance and trafficking and is essential for the localization of the BBSome complex in the olfactory sensory neurons cilia (PubMed:15322545, PubMed:28237838).</text>
</comment>
<comment type="subunit">
    <text evidence="1">Part of BBSome complex, that contains BBS1, BBS2, BBS4, BBS5, BBS7, BBS8/TTC8, BBS9 and BBIP10. Interacts with the C-terminus of RAB3IP. Interacts with CCDC28B and ALDOB. Interacts with PKD1.</text>
</comment>
<comment type="interaction">
    <interactant intactId="EBI-2892836">
        <id>Q3V3N7</id>
    </interactant>
    <interactant intactId="EBI-2892887">
        <id>Q8C1Z7</id>
        <label>Bbs4</label>
    </interactant>
    <organismsDiffer>false</organismsDiffer>
    <experiments>5</experiments>
</comment>
<comment type="subcellular location">
    <subcellularLocation>
        <location evidence="1">Cell projection</location>
        <location evidence="1">Cilium membrane</location>
    </subcellularLocation>
    <subcellularLocation>
        <location evidence="1">Cytoplasm</location>
    </subcellularLocation>
    <subcellularLocation>
        <location evidence="1">Cytoplasm</location>
        <location evidence="1">Cytoskeleton</location>
        <location evidence="1">Microtubule organizing center</location>
        <location evidence="1">Centrosome</location>
        <location evidence="1">Centriolar satellite</location>
    </subcellularLocation>
</comment>
<comment type="disruption phenotype">
    <text evidence="2 4">Mice are anosmic (inability to perceive odors) and have defective olfactory cilia. Significant reduction in olfactory sensory neurons ciliation in the olfactory epithelium with decreased cilium length and number. Impaired cilium localization of the BBSome complex.</text>
</comment>
<gene>
    <name type="primary">Bbs1</name>
</gene>
<organism>
    <name type="scientific">Mus musculus</name>
    <name type="common">Mouse</name>
    <dbReference type="NCBI Taxonomy" id="10090"/>
    <lineage>
        <taxon>Eukaryota</taxon>
        <taxon>Metazoa</taxon>
        <taxon>Chordata</taxon>
        <taxon>Craniata</taxon>
        <taxon>Vertebrata</taxon>
        <taxon>Euteleostomi</taxon>
        <taxon>Mammalia</taxon>
        <taxon>Eutheria</taxon>
        <taxon>Euarchontoglires</taxon>
        <taxon>Glires</taxon>
        <taxon>Rodentia</taxon>
        <taxon>Myomorpha</taxon>
        <taxon>Muroidea</taxon>
        <taxon>Muridae</taxon>
        <taxon>Murinae</taxon>
        <taxon>Mus</taxon>
        <taxon>Mus</taxon>
    </lineage>
</organism>
<feature type="initiator methionine" description="Removed" evidence="1">
    <location>
        <position position="1"/>
    </location>
</feature>
<feature type="chain" id="PRO_0000441016" description="BBSome complex member BBS1">
    <location>
        <begin position="2"/>
        <end position="593"/>
    </location>
</feature>
<feature type="modified residue" description="N-acetylalanine" evidence="1">
    <location>
        <position position="2"/>
    </location>
</feature>
<feature type="mutagenesis site" description="Knockin mice exhibit olfaction deficits, male infertility, ventriculomegaly, retinopathy and obesity." evidence="3">
    <original>M</original>
    <variation>R</variation>
    <location>
        <position position="390"/>
    </location>
</feature>
<reference key="1">
    <citation type="journal article" date="2005" name="Science">
        <title>The transcriptional landscape of the mammalian genome.</title>
        <authorList>
            <person name="Carninci P."/>
            <person name="Kasukawa T."/>
            <person name="Katayama S."/>
            <person name="Gough J."/>
            <person name="Frith M.C."/>
            <person name="Maeda N."/>
            <person name="Oyama R."/>
            <person name="Ravasi T."/>
            <person name="Lenhard B."/>
            <person name="Wells C."/>
            <person name="Kodzius R."/>
            <person name="Shimokawa K."/>
            <person name="Bajic V.B."/>
            <person name="Brenner S.E."/>
            <person name="Batalov S."/>
            <person name="Forrest A.R."/>
            <person name="Zavolan M."/>
            <person name="Davis M.J."/>
            <person name="Wilming L.G."/>
            <person name="Aidinis V."/>
            <person name="Allen J.E."/>
            <person name="Ambesi-Impiombato A."/>
            <person name="Apweiler R."/>
            <person name="Aturaliya R.N."/>
            <person name="Bailey T.L."/>
            <person name="Bansal M."/>
            <person name="Baxter L."/>
            <person name="Beisel K.W."/>
            <person name="Bersano T."/>
            <person name="Bono H."/>
            <person name="Chalk A.M."/>
            <person name="Chiu K.P."/>
            <person name="Choudhary V."/>
            <person name="Christoffels A."/>
            <person name="Clutterbuck D.R."/>
            <person name="Crowe M.L."/>
            <person name="Dalla E."/>
            <person name="Dalrymple B.P."/>
            <person name="de Bono B."/>
            <person name="Della Gatta G."/>
            <person name="di Bernardo D."/>
            <person name="Down T."/>
            <person name="Engstrom P."/>
            <person name="Fagiolini M."/>
            <person name="Faulkner G."/>
            <person name="Fletcher C.F."/>
            <person name="Fukushima T."/>
            <person name="Furuno M."/>
            <person name="Futaki S."/>
            <person name="Gariboldi M."/>
            <person name="Georgii-Hemming P."/>
            <person name="Gingeras T.R."/>
            <person name="Gojobori T."/>
            <person name="Green R.E."/>
            <person name="Gustincich S."/>
            <person name="Harbers M."/>
            <person name="Hayashi Y."/>
            <person name="Hensch T.K."/>
            <person name="Hirokawa N."/>
            <person name="Hill D."/>
            <person name="Huminiecki L."/>
            <person name="Iacono M."/>
            <person name="Ikeo K."/>
            <person name="Iwama A."/>
            <person name="Ishikawa T."/>
            <person name="Jakt M."/>
            <person name="Kanapin A."/>
            <person name="Katoh M."/>
            <person name="Kawasawa Y."/>
            <person name="Kelso J."/>
            <person name="Kitamura H."/>
            <person name="Kitano H."/>
            <person name="Kollias G."/>
            <person name="Krishnan S.P."/>
            <person name="Kruger A."/>
            <person name="Kummerfeld S.K."/>
            <person name="Kurochkin I.V."/>
            <person name="Lareau L.F."/>
            <person name="Lazarevic D."/>
            <person name="Lipovich L."/>
            <person name="Liu J."/>
            <person name="Liuni S."/>
            <person name="McWilliam S."/>
            <person name="Madan Babu M."/>
            <person name="Madera M."/>
            <person name="Marchionni L."/>
            <person name="Matsuda H."/>
            <person name="Matsuzawa S."/>
            <person name="Miki H."/>
            <person name="Mignone F."/>
            <person name="Miyake S."/>
            <person name="Morris K."/>
            <person name="Mottagui-Tabar S."/>
            <person name="Mulder N."/>
            <person name="Nakano N."/>
            <person name="Nakauchi H."/>
            <person name="Ng P."/>
            <person name="Nilsson R."/>
            <person name="Nishiguchi S."/>
            <person name="Nishikawa S."/>
            <person name="Nori F."/>
            <person name="Ohara O."/>
            <person name="Okazaki Y."/>
            <person name="Orlando V."/>
            <person name="Pang K.C."/>
            <person name="Pavan W.J."/>
            <person name="Pavesi G."/>
            <person name="Pesole G."/>
            <person name="Petrovsky N."/>
            <person name="Piazza S."/>
            <person name="Reed J."/>
            <person name="Reid J.F."/>
            <person name="Ring B.Z."/>
            <person name="Ringwald M."/>
            <person name="Rost B."/>
            <person name="Ruan Y."/>
            <person name="Salzberg S.L."/>
            <person name="Sandelin A."/>
            <person name="Schneider C."/>
            <person name="Schoenbach C."/>
            <person name="Sekiguchi K."/>
            <person name="Semple C.A."/>
            <person name="Seno S."/>
            <person name="Sessa L."/>
            <person name="Sheng Y."/>
            <person name="Shibata Y."/>
            <person name="Shimada H."/>
            <person name="Shimada K."/>
            <person name="Silva D."/>
            <person name="Sinclair B."/>
            <person name="Sperling S."/>
            <person name="Stupka E."/>
            <person name="Sugiura K."/>
            <person name="Sultana R."/>
            <person name="Takenaka Y."/>
            <person name="Taki K."/>
            <person name="Tammoja K."/>
            <person name="Tan S.L."/>
            <person name="Tang S."/>
            <person name="Taylor M.S."/>
            <person name="Tegner J."/>
            <person name="Teichmann S.A."/>
            <person name="Ueda H.R."/>
            <person name="van Nimwegen E."/>
            <person name="Verardo R."/>
            <person name="Wei C.L."/>
            <person name="Yagi K."/>
            <person name="Yamanishi H."/>
            <person name="Zabarovsky E."/>
            <person name="Zhu S."/>
            <person name="Zimmer A."/>
            <person name="Hide W."/>
            <person name="Bult C."/>
            <person name="Grimmond S.M."/>
            <person name="Teasdale R.D."/>
            <person name="Liu E.T."/>
            <person name="Brusic V."/>
            <person name="Quackenbush J."/>
            <person name="Wahlestedt C."/>
            <person name="Mattick J.S."/>
            <person name="Hume D.A."/>
            <person name="Kai C."/>
            <person name="Sasaki D."/>
            <person name="Tomaru Y."/>
            <person name="Fukuda S."/>
            <person name="Kanamori-Katayama M."/>
            <person name="Suzuki M."/>
            <person name="Aoki J."/>
            <person name="Arakawa T."/>
            <person name="Iida J."/>
            <person name="Imamura K."/>
            <person name="Itoh M."/>
            <person name="Kato T."/>
            <person name="Kawaji H."/>
            <person name="Kawagashira N."/>
            <person name="Kawashima T."/>
            <person name="Kojima M."/>
            <person name="Kondo S."/>
            <person name="Konno H."/>
            <person name="Nakano K."/>
            <person name="Ninomiya N."/>
            <person name="Nishio T."/>
            <person name="Okada M."/>
            <person name="Plessy C."/>
            <person name="Shibata K."/>
            <person name="Shiraki T."/>
            <person name="Suzuki S."/>
            <person name="Tagami M."/>
            <person name="Waki K."/>
            <person name="Watahiki A."/>
            <person name="Okamura-Oho Y."/>
            <person name="Suzuki H."/>
            <person name="Kawai J."/>
            <person name="Hayashizaki Y."/>
        </authorList>
    </citation>
    <scope>NUCLEOTIDE SEQUENCE [LARGE SCALE MRNA]</scope>
    <source>
        <strain>C57BL/6J</strain>
        <tissue>Thymus</tissue>
    </source>
</reference>
<reference key="2">
    <citation type="journal article" date="2009" name="PLoS Biol.">
        <title>Lineage-specific biology revealed by a finished genome assembly of the mouse.</title>
        <authorList>
            <person name="Church D.M."/>
            <person name="Goodstadt L."/>
            <person name="Hillier L.W."/>
            <person name="Zody M.C."/>
            <person name="Goldstein S."/>
            <person name="She X."/>
            <person name="Bult C.J."/>
            <person name="Agarwala R."/>
            <person name="Cherry J.L."/>
            <person name="DiCuccio M."/>
            <person name="Hlavina W."/>
            <person name="Kapustin Y."/>
            <person name="Meric P."/>
            <person name="Maglott D."/>
            <person name="Birtle Z."/>
            <person name="Marques A.C."/>
            <person name="Graves T."/>
            <person name="Zhou S."/>
            <person name="Teague B."/>
            <person name="Potamousis K."/>
            <person name="Churas C."/>
            <person name="Place M."/>
            <person name="Herschleb J."/>
            <person name="Runnheim R."/>
            <person name="Forrest D."/>
            <person name="Amos-Landgraf J."/>
            <person name="Schwartz D.C."/>
            <person name="Cheng Z."/>
            <person name="Lindblad-Toh K."/>
            <person name="Eichler E.E."/>
            <person name="Ponting C.P."/>
        </authorList>
    </citation>
    <scope>NUCLEOTIDE SEQUENCE [LARGE SCALE GENOMIC DNA]</scope>
    <source>
        <strain>C57BL/6J</strain>
        <tissue>Thymus</tissue>
    </source>
</reference>
<reference key="3">
    <citation type="journal article" date="2004" name="Nat. Genet.">
        <title>Loss of BBS proteins causes anosmia in humans and defects in olfactory cilia structure and function in the mouse.</title>
        <authorList>
            <person name="Kulaga H.M."/>
            <person name="Leitch C.C."/>
            <person name="Eichers E.R."/>
            <person name="Badano J.L."/>
            <person name="Lesemann A."/>
            <person name="Hoskins B.E."/>
            <person name="Lupski J.R."/>
            <person name="Beales P.L."/>
            <person name="Reed R.R."/>
            <person name="Katsanis N."/>
        </authorList>
    </citation>
    <scope>FUNCTION</scope>
    <scope>DISRUPTION PHENOTYPE</scope>
</reference>
<reference key="4">
    <citation type="journal article" date="2007" name="Proc. Natl. Acad. Sci. U.S.A.">
        <title>A knockin mouse model of the Bardet-Biedl syndrome 1 M390R mutation has cilia defects, ventriculomegaly, retinopathy, and obesity.</title>
        <authorList>
            <person name="Davis R.E."/>
            <person name="Swiderski R.E."/>
            <person name="Rahmouni K."/>
            <person name="Nishimura D.Y."/>
            <person name="Mullins R.F."/>
            <person name="Agassandian K."/>
            <person name="Philp A.R."/>
            <person name="Searby C.C."/>
            <person name="Andrews M.P."/>
            <person name="Thompson S."/>
            <person name="Berry C.J."/>
            <person name="Thedens D.R."/>
            <person name="Yang B."/>
            <person name="Weiss R.M."/>
            <person name="Cassell M.D."/>
            <person name="Stone E.M."/>
            <person name="Sheffield V.C."/>
        </authorList>
    </citation>
    <scope>MUTAGENESIS OF MET-390</scope>
</reference>
<reference key="5">
    <citation type="journal article" date="2010" name="Cell">
        <title>A tissue-specific atlas of mouse protein phosphorylation and expression.</title>
        <authorList>
            <person name="Huttlin E.L."/>
            <person name="Jedrychowski M.P."/>
            <person name="Elias J.E."/>
            <person name="Goswami T."/>
            <person name="Rad R."/>
            <person name="Beausoleil S.A."/>
            <person name="Villen J."/>
            <person name="Haas W."/>
            <person name="Sowa M.E."/>
            <person name="Gygi S.P."/>
        </authorList>
    </citation>
    <scope>IDENTIFICATION BY MASS SPECTROMETRY [LARGE SCALE ANALYSIS]</scope>
    <source>
        <tissue>Testis</tissue>
    </source>
</reference>
<reference key="6">
    <citation type="journal article" date="2017" name="Mol. Ther.">
        <title>Gene therapeutic reversal of peripheral olfactory impairment in Bardet-Biedl syndrome.</title>
        <authorList>
            <person name="Williams C.L."/>
            <person name="Uytingco C.R."/>
            <person name="Green W.W."/>
            <person name="McIntyre J.C."/>
            <person name="Ukhanov K."/>
            <person name="Zimmerman A.D."/>
            <person name="Shively D.T."/>
            <person name="Zhang L."/>
            <person name="Nishimura D.Y."/>
            <person name="Sheffield V.C."/>
            <person name="Martens J.R."/>
        </authorList>
    </citation>
    <scope>FUNCTION</scope>
    <scope>DISRUPTION PHENOTYPE</scope>
</reference>
<dbReference type="EMBL" id="AK037753">
    <property type="protein sequence ID" value="BAE20519.1"/>
    <property type="molecule type" value="mRNA"/>
</dbReference>
<dbReference type="EMBL" id="AC141437">
    <property type="status" value="NOT_ANNOTATED_CDS"/>
    <property type="molecule type" value="Genomic_DNA"/>
</dbReference>
<dbReference type="CCDS" id="CCDS29442.1"/>
<dbReference type="RefSeq" id="NP_001028300.1">
    <property type="nucleotide sequence ID" value="NM_001033128.3"/>
</dbReference>
<dbReference type="SMR" id="Q3V3N7"/>
<dbReference type="ComplexPortal" id="CPX-1909">
    <property type="entry name" value="BBSome complex"/>
</dbReference>
<dbReference type="FunCoup" id="Q3V3N7">
    <property type="interactions" value="794"/>
</dbReference>
<dbReference type="IntAct" id="Q3V3N7">
    <property type="interactions" value="10"/>
</dbReference>
<dbReference type="STRING" id="10090.ENSMUSP00000055321"/>
<dbReference type="GlyGen" id="Q3V3N7">
    <property type="glycosylation" value="1 site, 1 N-linked glycan (1 site)"/>
</dbReference>
<dbReference type="iPTMnet" id="Q3V3N7"/>
<dbReference type="PhosphoSitePlus" id="Q3V3N7"/>
<dbReference type="SwissPalm" id="Q3V3N7"/>
<dbReference type="PaxDb" id="10090-ENSMUSP00000055321"/>
<dbReference type="ProteomicsDB" id="273440"/>
<dbReference type="Pumba" id="Q3V3N7"/>
<dbReference type="Ensembl" id="ENSMUST00000053506.8">
    <property type="protein sequence ID" value="ENSMUSP00000055321.7"/>
    <property type="gene ID" value="ENSMUSG00000006464.10"/>
</dbReference>
<dbReference type="GeneID" id="52028"/>
<dbReference type="KEGG" id="mmu:52028"/>
<dbReference type="UCSC" id="uc008gbk.2">
    <property type="organism name" value="mouse"/>
</dbReference>
<dbReference type="AGR" id="MGI:1277215"/>
<dbReference type="CTD" id="582"/>
<dbReference type="MGI" id="MGI:1277215">
    <property type="gene designation" value="Bbs1"/>
</dbReference>
<dbReference type="VEuPathDB" id="HostDB:ENSMUSG00000006464"/>
<dbReference type="eggNOG" id="ENOG502QS2X">
    <property type="taxonomic scope" value="Eukaryota"/>
</dbReference>
<dbReference type="GeneTree" id="ENSGT00390000005232"/>
<dbReference type="HOGENOM" id="CLU_032988_1_0_1"/>
<dbReference type="InParanoid" id="Q3V3N7"/>
<dbReference type="OMA" id="HADRRHY"/>
<dbReference type="OrthoDB" id="10259809at2759"/>
<dbReference type="PhylomeDB" id="Q3V3N7"/>
<dbReference type="TreeFam" id="TF312892"/>
<dbReference type="Reactome" id="R-MMU-5620922">
    <property type="pathway name" value="BBSome-mediated cargo-targeting to cilium"/>
</dbReference>
<dbReference type="BioGRID-ORCS" id="52028">
    <property type="hits" value="2 hits in 76 CRISPR screens"/>
</dbReference>
<dbReference type="PRO" id="PR:Q3V3N7"/>
<dbReference type="Proteomes" id="UP000000589">
    <property type="component" value="Chromosome 19"/>
</dbReference>
<dbReference type="RNAct" id="Q3V3N7">
    <property type="molecule type" value="protein"/>
</dbReference>
<dbReference type="Bgee" id="ENSMUSG00000006464">
    <property type="expression patterns" value="Expressed in embryonic brain and 172 other cell types or tissues"/>
</dbReference>
<dbReference type="ExpressionAtlas" id="Q3V3N7">
    <property type="expression patterns" value="baseline and differential"/>
</dbReference>
<dbReference type="GO" id="GO:0034464">
    <property type="term" value="C:BBSome"/>
    <property type="evidence" value="ECO:0000314"/>
    <property type="project" value="MGI"/>
</dbReference>
<dbReference type="GO" id="GO:0034451">
    <property type="term" value="C:centriolar satellite"/>
    <property type="evidence" value="ECO:0000314"/>
    <property type="project" value="MGI"/>
</dbReference>
<dbReference type="GO" id="GO:0005813">
    <property type="term" value="C:centrosome"/>
    <property type="evidence" value="ECO:0000314"/>
    <property type="project" value="MGI"/>
</dbReference>
<dbReference type="GO" id="GO:0036064">
    <property type="term" value="C:ciliary basal body"/>
    <property type="evidence" value="ECO:0000266"/>
    <property type="project" value="MGI"/>
</dbReference>
<dbReference type="GO" id="GO:0060170">
    <property type="term" value="C:ciliary membrane"/>
    <property type="evidence" value="ECO:0000266"/>
    <property type="project" value="ComplexPortal"/>
</dbReference>
<dbReference type="GO" id="GO:0005929">
    <property type="term" value="C:cilium"/>
    <property type="evidence" value="ECO:0000314"/>
    <property type="project" value="MGI"/>
</dbReference>
<dbReference type="GO" id="GO:0005737">
    <property type="term" value="C:cytoplasm"/>
    <property type="evidence" value="ECO:0007669"/>
    <property type="project" value="UniProtKB-SubCell"/>
</dbReference>
<dbReference type="GO" id="GO:0031514">
    <property type="term" value="C:motile cilium"/>
    <property type="evidence" value="ECO:0000315"/>
    <property type="project" value="BHF-UCL"/>
</dbReference>
<dbReference type="GO" id="GO:0005113">
    <property type="term" value="F:patched binding"/>
    <property type="evidence" value="ECO:0000266"/>
    <property type="project" value="MGI"/>
</dbReference>
<dbReference type="GO" id="GO:0051219">
    <property type="term" value="F:phosphoprotein binding"/>
    <property type="evidence" value="ECO:0000353"/>
    <property type="project" value="MGI"/>
</dbReference>
<dbReference type="GO" id="GO:0061629">
    <property type="term" value="F:RNA polymerase II-specific DNA-binding transcription factor binding"/>
    <property type="evidence" value="ECO:0000266"/>
    <property type="project" value="MGI"/>
</dbReference>
<dbReference type="GO" id="GO:0005102">
    <property type="term" value="F:signaling receptor binding"/>
    <property type="evidence" value="ECO:0000353"/>
    <property type="project" value="BHF-UCL"/>
</dbReference>
<dbReference type="GO" id="GO:0005119">
    <property type="term" value="F:smoothened binding"/>
    <property type="evidence" value="ECO:0000266"/>
    <property type="project" value="MGI"/>
</dbReference>
<dbReference type="GO" id="GO:0030534">
    <property type="term" value="P:adult behavior"/>
    <property type="evidence" value="ECO:0000315"/>
    <property type="project" value="MGI"/>
</dbReference>
<dbReference type="GO" id="GO:0048854">
    <property type="term" value="P:brain morphogenesis"/>
    <property type="evidence" value="ECO:0000315"/>
    <property type="project" value="MGI"/>
</dbReference>
<dbReference type="GO" id="GO:0051216">
    <property type="term" value="P:cartilage development"/>
    <property type="evidence" value="ECO:0000315"/>
    <property type="project" value="MGI"/>
</dbReference>
<dbReference type="GO" id="GO:0021987">
    <property type="term" value="P:cerebral cortex development"/>
    <property type="evidence" value="ECO:0000315"/>
    <property type="project" value="MGI"/>
</dbReference>
<dbReference type="GO" id="GO:0060271">
    <property type="term" value="P:cilium assembly"/>
    <property type="evidence" value="ECO:0000315"/>
    <property type="project" value="BHF-UCL"/>
</dbReference>
<dbReference type="GO" id="GO:0016358">
    <property type="term" value="P:dendrite development"/>
    <property type="evidence" value="ECO:0000315"/>
    <property type="project" value="MGI"/>
</dbReference>
<dbReference type="GO" id="GO:0045444">
    <property type="term" value="P:fat cell differentiation"/>
    <property type="evidence" value="ECO:0000270"/>
    <property type="project" value="BHF-UCL"/>
</dbReference>
<dbReference type="GO" id="GO:0009566">
    <property type="term" value="P:fertilization"/>
    <property type="evidence" value="ECO:0000315"/>
    <property type="project" value="MGI"/>
</dbReference>
<dbReference type="GO" id="GO:0043001">
    <property type="term" value="P:Golgi to plasma membrane protein transport"/>
    <property type="evidence" value="ECO:0000266"/>
    <property type="project" value="MGI"/>
</dbReference>
<dbReference type="GO" id="GO:0021766">
    <property type="term" value="P:hippocampus development"/>
    <property type="evidence" value="ECO:0000315"/>
    <property type="project" value="MGI"/>
</dbReference>
<dbReference type="GO" id="GO:0042445">
    <property type="term" value="P:hormone metabolic process"/>
    <property type="evidence" value="ECO:0000315"/>
    <property type="project" value="MGI"/>
</dbReference>
<dbReference type="GO" id="GO:0035721">
    <property type="term" value="P:intraciliary retrograde transport"/>
    <property type="evidence" value="ECO:0000266"/>
    <property type="project" value="MGI"/>
</dbReference>
<dbReference type="GO" id="GO:0006629">
    <property type="term" value="P:lipid metabolic process"/>
    <property type="evidence" value="ECO:0000315"/>
    <property type="project" value="MGI"/>
</dbReference>
<dbReference type="GO" id="GO:0000226">
    <property type="term" value="P:microtubule cytoskeleton organization"/>
    <property type="evidence" value="ECO:0000315"/>
    <property type="project" value="MGI"/>
</dbReference>
<dbReference type="GO" id="GO:0061351">
    <property type="term" value="P:neural precursor cell proliferation"/>
    <property type="evidence" value="ECO:0000315"/>
    <property type="project" value="MGI"/>
</dbReference>
<dbReference type="GO" id="GO:0001764">
    <property type="term" value="P:neuron migration"/>
    <property type="evidence" value="ECO:0000315"/>
    <property type="project" value="MGI"/>
</dbReference>
<dbReference type="GO" id="GO:1905515">
    <property type="term" value="P:non-motile cilium assembly"/>
    <property type="evidence" value="ECO:0000315"/>
    <property type="project" value="MGI"/>
</dbReference>
<dbReference type="GO" id="GO:0042048">
    <property type="term" value="P:olfactory behavior"/>
    <property type="evidence" value="ECO:0000315"/>
    <property type="project" value="MGI"/>
</dbReference>
<dbReference type="GO" id="GO:0045494">
    <property type="term" value="P:photoreceptor cell maintenance"/>
    <property type="evidence" value="ECO:0007669"/>
    <property type="project" value="Ensembl"/>
</dbReference>
<dbReference type="GO" id="GO:0008594">
    <property type="term" value="P:photoreceptor cell morphogenesis"/>
    <property type="evidence" value="ECO:0000315"/>
    <property type="project" value="MGI"/>
</dbReference>
<dbReference type="GO" id="GO:0008104">
    <property type="term" value="P:protein localization"/>
    <property type="evidence" value="ECO:0000315"/>
    <property type="project" value="MGI"/>
</dbReference>
<dbReference type="GO" id="GO:0061512">
    <property type="term" value="P:protein localization to cilium"/>
    <property type="evidence" value="ECO:0000266"/>
    <property type="project" value="MGI"/>
</dbReference>
<dbReference type="GO" id="GO:0060296">
    <property type="term" value="P:regulation of cilium beat frequency involved in ciliary motility"/>
    <property type="evidence" value="ECO:0000315"/>
    <property type="project" value="BHF-UCL"/>
</dbReference>
<dbReference type="GO" id="GO:0034976">
    <property type="term" value="P:response to endoplasmic reticulum stress"/>
    <property type="evidence" value="ECO:0000315"/>
    <property type="project" value="MGI"/>
</dbReference>
<dbReference type="GO" id="GO:0060041">
    <property type="term" value="P:retina development in camera-type eye"/>
    <property type="evidence" value="ECO:0000315"/>
    <property type="project" value="MGI"/>
</dbReference>
<dbReference type="GO" id="GO:0001895">
    <property type="term" value="P:retina homeostasis"/>
    <property type="evidence" value="ECO:0000315"/>
    <property type="project" value="MGI"/>
</dbReference>
<dbReference type="GO" id="GO:0007608">
    <property type="term" value="P:sensory perception of smell"/>
    <property type="evidence" value="ECO:0000315"/>
    <property type="project" value="MGI"/>
</dbReference>
<dbReference type="GO" id="GO:0021756">
    <property type="term" value="P:striatum development"/>
    <property type="evidence" value="ECO:0000315"/>
    <property type="project" value="MGI"/>
</dbReference>
<dbReference type="GO" id="GO:0021591">
    <property type="term" value="P:ventricular system development"/>
    <property type="evidence" value="ECO:0000315"/>
    <property type="project" value="MGI"/>
</dbReference>
<dbReference type="GO" id="GO:0007601">
    <property type="term" value="P:visual perception"/>
    <property type="evidence" value="ECO:0000315"/>
    <property type="project" value="MGI"/>
</dbReference>
<dbReference type="FunFam" id="2.130.10.10:FF:002248">
    <property type="entry name" value="Bardet-Biedl syndrome 1"/>
    <property type="match status" value="1"/>
</dbReference>
<dbReference type="InterPro" id="IPR028784">
    <property type="entry name" value="BBS1"/>
</dbReference>
<dbReference type="InterPro" id="IPR032728">
    <property type="entry name" value="BBS1_N"/>
</dbReference>
<dbReference type="InterPro" id="IPR056419">
    <property type="entry name" value="GAE_BBS1"/>
</dbReference>
<dbReference type="InterPro" id="IPR011047">
    <property type="entry name" value="Quinoprotein_ADH-like_sf"/>
</dbReference>
<dbReference type="PANTHER" id="PTHR20870">
    <property type="entry name" value="BARDET-BIEDL SYNDROME 1 PROTEIN"/>
    <property type="match status" value="1"/>
</dbReference>
<dbReference type="PANTHER" id="PTHR20870:SF0">
    <property type="entry name" value="BARDET-BIEDL SYNDROME 1 PROTEIN"/>
    <property type="match status" value="1"/>
</dbReference>
<dbReference type="Pfam" id="PF14779">
    <property type="entry name" value="BBS1"/>
    <property type="match status" value="1"/>
</dbReference>
<dbReference type="Pfam" id="PF23304">
    <property type="entry name" value="GAE_BBS1"/>
    <property type="match status" value="1"/>
</dbReference>
<dbReference type="SUPFAM" id="SSF50998">
    <property type="entry name" value="Quinoprotein alcohol dehydrogenase-like"/>
    <property type="match status" value="1"/>
</dbReference>
<sequence>MAAASSSDSDSGRAESNEANSKWLDAHYDPMANIHTFSSCLSLADLHGDGEYKLVVGDLGPGGQQPRLKVLKGPTVLTESPLPALPASAATFLMDQHEPRTPALALASGPCVYVYKNLRPYFKFSLPQLPPNPLEQDVWNQAKEDQIDPLTLKEMLEDIREKADVPLSVQSLRFLQLELSEMEAFVNQHKSKVIKRQTVITTMTTLKKNLADEDAASCLVLGTESKELLVLDPEAFTILAKMSLPSVPVFLEVSGQFDVEFRLTAACRNGSIYILRRDSKHPKYCIELSAQPVGLVRVHKVLVVGSTQESLHGFTHKGKKLWTVQMPAAILTMNLLEQRSRGLQAVMAALANGEVRIYRDKALLNVIHAPDAVTSLCFGRYGREDNTLIMTTRGGGLIIKILKRTAVFVEGTGEVGPPLAQTTKLSVPRKTRLYVDQTLREREAGTAMHRTFQTDLYLLRLRAARAYVQALESSLSPMSTTAREPLKLHAVVQGLGPTFKLTLHLQNTSTARPVLGLHVCFLYNKALYALPQAFFKVPLLVPGLSYPLETFVESLSSKGISDMIKVLVLREGQSAPLLSAHINMPVSEGLAAA</sequence>
<name>BBS1_MOUSE</name>